<keyword id="KW-0143">Chaperone</keyword>
<keyword id="KW-0256">Endoplasmic reticulum</keyword>
<keyword id="KW-0945">Host-virus interaction</keyword>
<keyword id="KW-0472">Membrane</keyword>
<keyword id="KW-0653">Protein transport</keyword>
<keyword id="KW-1185">Reference proteome</keyword>
<keyword id="KW-0812">Transmembrane</keyword>
<keyword id="KW-1133">Transmembrane helix</keyword>
<keyword id="KW-0813">Transport</keyword>
<accession>Q95J56</accession>
<accession>B0JYR1</accession>
<sequence>MAQKHPGEGGLCGAHHSGGASLRTLGPSVDPDILSFSGLRDSAGSAPNGTRCLTEHSSPKYTQPPNPAHWSDPSHGPPRGPGPPLAEEDPDQSEASSEESGVDQELSRENETGYQDDGNSSFLSIPSTCNCQGTPGIPEGPYSEGRDSSSSNFCHHCTSPALGEDEELEGEYDEEEPLKFPSDVSRVPSEKKPAPRRQRHRVPAKEDTREGGRRDPRSPGRHRLGRKRSQADKRRGLGLWGAEELCQLGQAGFWWLIELLVLVGEYVETCGHLIYACRQLKGSDLDLLRVWVGVWAGRLRGWAQVMFQFLSQGFCYGAGLFTRFLRLVGALLLLALALLLGCLQLGWRFLVGLSDRLGWRDKATWIFSWLASPTWQRCLILLRESRPWQQLVRIVQWGWLELPWVKQRTNRQANAPVAGGRYCQPEEEVARLLTMAGVPEDELNPFHVLGVEATASDVELKKAYRQLAVMVHPDKNHHPRAEEAFKVLRAAWDIVSNPERRKEYEMKRMAENELSRSVNEFLSKLQEAMNTMMCSRCQGKHRRFEMDREPKSARYCAECNRLHPAEEGDFWAESSMLGLKITYFALMDGKVYDITEWAGCQRVGISPDTHRVPYHISFGSRMPGTSGRQRATPDAPPADLQDFLSRIFQVPPGQMSNGNFFAAPQPGPGATAASKPNSTVPKGEAKPKRRKKVRRPFQR</sequence>
<gene>
    <name type="primary">DNAJC14</name>
</gene>
<proteinExistence type="evidence at protein level"/>
<feature type="chain" id="PRO_0000247492" description="DnaJ homolog subfamily C member 14">
    <location>
        <begin position="1"/>
        <end position="699"/>
    </location>
</feature>
<feature type="transmembrane region" description="Helical" evidence="2">
    <location>
        <begin position="251"/>
        <end position="271"/>
    </location>
</feature>
<feature type="transmembrane region" description="Helical" evidence="2">
    <location>
        <begin position="301"/>
        <end position="321"/>
    </location>
</feature>
<feature type="transmembrane region" description="Helical" evidence="2">
    <location>
        <begin position="327"/>
        <end position="347"/>
    </location>
</feature>
<feature type="domain" description="J" evidence="3">
    <location>
        <begin position="444"/>
        <end position="508"/>
    </location>
</feature>
<feature type="region of interest" description="Disordered" evidence="4">
    <location>
        <begin position="1"/>
        <end position="230"/>
    </location>
</feature>
<feature type="region of interest" description="Disordered" evidence="4">
    <location>
        <begin position="655"/>
        <end position="699"/>
    </location>
</feature>
<feature type="compositionally biased region" description="Pro residues" evidence="4">
    <location>
        <begin position="75"/>
        <end position="84"/>
    </location>
</feature>
<feature type="compositionally biased region" description="Acidic residues" evidence="4">
    <location>
        <begin position="86"/>
        <end position="102"/>
    </location>
</feature>
<feature type="compositionally biased region" description="Polar residues" evidence="4">
    <location>
        <begin position="117"/>
        <end position="133"/>
    </location>
</feature>
<feature type="compositionally biased region" description="Acidic residues" evidence="4">
    <location>
        <begin position="163"/>
        <end position="176"/>
    </location>
</feature>
<feature type="compositionally biased region" description="Basic and acidic residues" evidence="4">
    <location>
        <begin position="203"/>
        <end position="218"/>
    </location>
</feature>
<feature type="compositionally biased region" description="Basic residues" evidence="4">
    <location>
        <begin position="219"/>
        <end position="228"/>
    </location>
</feature>
<feature type="compositionally biased region" description="Low complexity" evidence="4">
    <location>
        <begin position="662"/>
        <end position="673"/>
    </location>
</feature>
<feature type="compositionally biased region" description="Basic residues" evidence="4">
    <location>
        <begin position="687"/>
        <end position="699"/>
    </location>
</feature>
<organism>
    <name type="scientific">Bos taurus</name>
    <name type="common">Bovine</name>
    <dbReference type="NCBI Taxonomy" id="9913"/>
    <lineage>
        <taxon>Eukaryota</taxon>
        <taxon>Metazoa</taxon>
        <taxon>Chordata</taxon>
        <taxon>Craniata</taxon>
        <taxon>Vertebrata</taxon>
        <taxon>Euteleostomi</taxon>
        <taxon>Mammalia</taxon>
        <taxon>Eutheria</taxon>
        <taxon>Laurasiatheria</taxon>
        <taxon>Artiodactyla</taxon>
        <taxon>Ruminantia</taxon>
        <taxon>Pecora</taxon>
        <taxon>Bovidae</taxon>
        <taxon>Bovinae</taxon>
        <taxon>Bos</taxon>
    </lineage>
</organism>
<name>DJC14_BOVIN</name>
<protein>
    <recommendedName>
        <fullName>DnaJ homolog subfamily C member 14</fullName>
    </recommendedName>
    <alternativeName>
        <fullName>J domain protein interacting with viral protein</fullName>
        <shortName>Jiv</shortName>
    </alternativeName>
</protein>
<comment type="function">
    <text evidence="1">Regulates the export of target proteins, such as DRD1, from the endoplasmic reticulum to the cell surface (By similarity). Promotes cleavage of pestivirus polyprotein.</text>
</comment>
<comment type="subunit">
    <text evidence="1 5">Interacts with the FxxxFxxxF motif of DRD1 via its C-terminal domain (By similarity). Interacts with pestivirus nonstructural protein NS2.</text>
</comment>
<comment type="interaction">
    <interactant intactId="EBI-9612178">
        <id>Q95J56</id>
    </interactant>
    <interactant intactId="EBI-9612504">
        <id>PRO_0000038031</id>
        <dbReference type="UniProtKB" id="P19711"/>
    </interactant>
    <organismsDiffer>true</organismsDiffer>
    <experiments>2</experiments>
</comment>
<comment type="subcellular location">
    <subcellularLocation>
        <location evidence="5">Endoplasmic reticulum membrane</location>
        <topology evidence="5">Multi-pass membrane protein</topology>
    </subcellularLocation>
</comment>
<evidence type="ECO:0000250" key="1"/>
<evidence type="ECO:0000255" key="2"/>
<evidence type="ECO:0000255" key="3">
    <source>
        <dbReference type="PROSITE-ProRule" id="PRU00286"/>
    </source>
</evidence>
<evidence type="ECO:0000256" key="4">
    <source>
        <dbReference type="SAM" id="MobiDB-lite"/>
    </source>
</evidence>
<evidence type="ECO:0000269" key="5">
    <source>
    </source>
</evidence>
<dbReference type="EMBL" id="AY027881">
    <property type="protein sequence ID" value="AAK28650.1"/>
    <property type="molecule type" value="mRNA"/>
</dbReference>
<dbReference type="EMBL" id="AY027882">
    <property type="protein sequence ID" value="AAK28651.1"/>
    <property type="molecule type" value="mRNA"/>
</dbReference>
<dbReference type="EMBL" id="BT025444">
    <property type="protein sequence ID" value="ABF57400.1"/>
    <property type="molecule type" value="mRNA"/>
</dbReference>
<dbReference type="EMBL" id="BC151599">
    <property type="protein sequence ID" value="AAI51600.1"/>
    <property type="molecule type" value="mRNA"/>
</dbReference>
<dbReference type="RefSeq" id="NP_776699.1">
    <property type="nucleotide sequence ID" value="NM_174274.1"/>
</dbReference>
<dbReference type="RefSeq" id="XP_059742085.1">
    <property type="nucleotide sequence ID" value="XM_059886102.1"/>
</dbReference>
<dbReference type="SMR" id="Q95J56"/>
<dbReference type="FunCoup" id="Q95J56">
    <property type="interactions" value="3692"/>
</dbReference>
<dbReference type="IntAct" id="Q95J56">
    <property type="interactions" value="1"/>
</dbReference>
<dbReference type="STRING" id="9913.ENSBTAP00000027541"/>
<dbReference type="PaxDb" id="9913-ENSBTAP00000027541"/>
<dbReference type="Ensembl" id="ENSBTAT00000027541.5">
    <property type="protein sequence ID" value="ENSBTAP00000027541.3"/>
    <property type="gene ID" value="ENSBTAG00000020664.7"/>
</dbReference>
<dbReference type="GeneID" id="281691"/>
<dbReference type="KEGG" id="bta:281691"/>
<dbReference type="CTD" id="85406"/>
<dbReference type="VEuPathDB" id="HostDB:ENSBTAG00000020664"/>
<dbReference type="VGNC" id="VGNC:111244">
    <property type="gene designation" value="DNAJC14"/>
</dbReference>
<dbReference type="eggNOG" id="KOG0720">
    <property type="taxonomic scope" value="Eukaryota"/>
</dbReference>
<dbReference type="GeneTree" id="ENSGT00940000155637"/>
<dbReference type="HOGENOM" id="CLU_020746_0_0_1"/>
<dbReference type="InParanoid" id="Q95J56"/>
<dbReference type="OMA" id="WLELPWF"/>
<dbReference type="OrthoDB" id="1507364at2759"/>
<dbReference type="TreeFam" id="TF105173"/>
<dbReference type="Proteomes" id="UP000009136">
    <property type="component" value="Chromosome 5"/>
</dbReference>
<dbReference type="Bgee" id="ENSBTAG00000020664">
    <property type="expression patterns" value="Expressed in granulosa cell and 103 other cell types or tissues"/>
</dbReference>
<dbReference type="GO" id="GO:0005789">
    <property type="term" value="C:endoplasmic reticulum membrane"/>
    <property type="evidence" value="ECO:0007669"/>
    <property type="project" value="UniProtKB-SubCell"/>
</dbReference>
<dbReference type="GO" id="GO:0050780">
    <property type="term" value="F:dopamine receptor binding"/>
    <property type="evidence" value="ECO:0000318"/>
    <property type="project" value="GO_Central"/>
</dbReference>
<dbReference type="GO" id="GO:0015031">
    <property type="term" value="P:protein transport"/>
    <property type="evidence" value="ECO:0007669"/>
    <property type="project" value="UniProtKB-KW"/>
</dbReference>
<dbReference type="CDD" id="cd06257">
    <property type="entry name" value="DnaJ"/>
    <property type="match status" value="1"/>
</dbReference>
<dbReference type="FunFam" id="1.10.287.110:FF:000057">
    <property type="entry name" value="dnaJ homolog subfamily C member 14"/>
    <property type="match status" value="1"/>
</dbReference>
<dbReference type="Gene3D" id="1.10.287.110">
    <property type="entry name" value="DnaJ domain"/>
    <property type="match status" value="1"/>
</dbReference>
<dbReference type="InterPro" id="IPR001623">
    <property type="entry name" value="DnaJ_domain"/>
</dbReference>
<dbReference type="InterPro" id="IPR036869">
    <property type="entry name" value="J_dom_sf"/>
</dbReference>
<dbReference type="InterPro" id="IPR032843">
    <property type="entry name" value="Jiv"/>
</dbReference>
<dbReference type="InterPro" id="IPR052317">
    <property type="entry name" value="Viral_replicn-host_int_reg"/>
</dbReference>
<dbReference type="PANTHER" id="PTHR44665">
    <property type="entry name" value="DNAJ HOMOLOG SUBFAMILY C MEMBER 14"/>
    <property type="match status" value="1"/>
</dbReference>
<dbReference type="PANTHER" id="PTHR44665:SF1">
    <property type="entry name" value="DNAJ HOMOLOG SUBFAMILY C MEMBER 14"/>
    <property type="match status" value="1"/>
</dbReference>
<dbReference type="Pfam" id="PF00226">
    <property type="entry name" value="DnaJ"/>
    <property type="match status" value="1"/>
</dbReference>
<dbReference type="Pfam" id="PF14901">
    <property type="entry name" value="Jiv90"/>
    <property type="match status" value="1"/>
</dbReference>
<dbReference type="PRINTS" id="PR00625">
    <property type="entry name" value="JDOMAIN"/>
</dbReference>
<dbReference type="SMART" id="SM00271">
    <property type="entry name" value="DnaJ"/>
    <property type="match status" value="1"/>
</dbReference>
<dbReference type="SUPFAM" id="SSF46565">
    <property type="entry name" value="Chaperone J-domain"/>
    <property type="match status" value="1"/>
</dbReference>
<dbReference type="PROSITE" id="PS50076">
    <property type="entry name" value="DNAJ_2"/>
    <property type="match status" value="1"/>
</dbReference>
<reference key="1">
    <citation type="journal article" date="2001" name="J. Virol.">
        <title>A cellular J-domain protein modulates polyprotein processing and cytopathogenicity of a pestivirus.</title>
        <authorList>
            <person name="Rinck G."/>
            <person name="Birghan C."/>
            <person name="Harada T."/>
            <person name="Meyers G."/>
            <person name="Thiel H.-J."/>
            <person name="Tautz N."/>
        </authorList>
    </citation>
    <scope>NUCLEOTIDE SEQUENCE [MRNA]</scope>
    <scope>SUBCELLULAR LOCATION</scope>
    <scope>INTERACTION WITH PESTIVIRUS NS2</scope>
</reference>
<reference key="2">
    <citation type="journal article" date="2005" name="BMC Genomics">
        <title>Characterization of 954 bovine full-CDS cDNA sequences.</title>
        <authorList>
            <person name="Harhay G.P."/>
            <person name="Sonstegard T.S."/>
            <person name="Keele J.W."/>
            <person name="Heaton M.P."/>
            <person name="Clawson M.L."/>
            <person name="Snelling W.M."/>
            <person name="Wiedmann R.T."/>
            <person name="Van Tassell C.P."/>
            <person name="Smith T.P.L."/>
        </authorList>
    </citation>
    <scope>NUCLEOTIDE SEQUENCE [LARGE SCALE MRNA]</scope>
</reference>
<reference key="3">
    <citation type="submission" date="2007-07" db="EMBL/GenBank/DDBJ databases">
        <authorList>
            <consortium name="NIH - Mammalian Gene Collection (MGC) project"/>
        </authorList>
    </citation>
    <scope>NUCLEOTIDE SEQUENCE [LARGE SCALE MRNA]</scope>
    <source>
        <strain>Hereford</strain>
        <tissue>Thymus</tissue>
    </source>
</reference>